<protein>
    <recommendedName>
        <fullName evidence="1">Urease accessory protein UreE</fullName>
    </recommendedName>
</protein>
<keyword id="KW-0143">Chaperone</keyword>
<keyword id="KW-0963">Cytoplasm</keyword>
<keyword id="KW-0533">Nickel</keyword>
<keyword id="KW-0996">Nickel insertion</keyword>
<evidence type="ECO:0000255" key="1">
    <source>
        <dbReference type="HAMAP-Rule" id="MF_00822"/>
    </source>
</evidence>
<accession>A5FAD0</accession>
<gene>
    <name evidence="1" type="primary">ureE</name>
    <name type="ordered locus">Fjoh_4834</name>
</gene>
<feature type="chain" id="PRO_1000083891" description="Urease accessory protein UreE">
    <location>
        <begin position="1"/>
        <end position="165"/>
    </location>
</feature>
<sequence>MIINEIEGSLREFDITNRVVDYLEIEWFESTKRIQRKKSKNGQEVAIKFLKEGQRLKHEDVIYADDQKIIVVDIIPCDAIVVKPKSLLEMGNVCYEIGNKHLPMFIQNDEVLLPFEEPIFKWLSASGYHTEKVFTRLTNIVNSTVQPHGHSESSSLFFKIMNIAK</sequence>
<reference key="1">
    <citation type="journal article" date="2009" name="Appl. Environ. Microbiol.">
        <title>Novel features of the polysaccharide-digesting gliding bacterium Flavobacterium johnsoniae as revealed by genome sequence analysis.</title>
        <authorList>
            <person name="McBride M.J."/>
            <person name="Xie G."/>
            <person name="Martens E.C."/>
            <person name="Lapidus A."/>
            <person name="Henrissat B."/>
            <person name="Rhodes R.G."/>
            <person name="Goltsman E."/>
            <person name="Wang W."/>
            <person name="Xu J."/>
            <person name="Hunnicutt D.W."/>
            <person name="Staroscik A.M."/>
            <person name="Hoover T.R."/>
            <person name="Cheng Y.Q."/>
            <person name="Stein J.L."/>
        </authorList>
    </citation>
    <scope>NUCLEOTIDE SEQUENCE [LARGE SCALE GENOMIC DNA]</scope>
    <source>
        <strain>ATCC 17061 / DSM 2064 / JCM 8514 / BCRC 14874 / CCUG 350202 / NBRC 14942 / NCIMB 11054 / UW101</strain>
    </source>
</reference>
<name>UREE_FLAJ1</name>
<proteinExistence type="inferred from homology"/>
<comment type="function">
    <text evidence="1">Involved in urease metallocenter assembly. Binds nickel. Probably functions as a nickel donor during metallocenter assembly.</text>
</comment>
<comment type="subcellular location">
    <subcellularLocation>
        <location evidence="1">Cytoplasm</location>
    </subcellularLocation>
</comment>
<comment type="similarity">
    <text evidence="1">Belongs to the UreE family.</text>
</comment>
<organism>
    <name type="scientific">Flavobacterium johnsoniae (strain ATCC 17061 / DSM 2064 / JCM 8514 / BCRC 14874 / CCUG 350202 / NBRC 14942 / NCIMB 11054 / UW101)</name>
    <name type="common">Cytophaga johnsonae</name>
    <dbReference type="NCBI Taxonomy" id="376686"/>
    <lineage>
        <taxon>Bacteria</taxon>
        <taxon>Pseudomonadati</taxon>
        <taxon>Bacteroidota</taxon>
        <taxon>Flavobacteriia</taxon>
        <taxon>Flavobacteriales</taxon>
        <taxon>Flavobacteriaceae</taxon>
        <taxon>Flavobacterium</taxon>
    </lineage>
</organism>
<dbReference type="EMBL" id="CP000685">
    <property type="protein sequence ID" value="ABQ07833.1"/>
    <property type="molecule type" value="Genomic_DNA"/>
</dbReference>
<dbReference type="RefSeq" id="WP_012026799.1">
    <property type="nucleotide sequence ID" value="NC_009441.1"/>
</dbReference>
<dbReference type="SMR" id="A5FAD0"/>
<dbReference type="STRING" id="376686.Fjoh_4834"/>
<dbReference type="KEGG" id="fjo:Fjoh_4834"/>
<dbReference type="eggNOG" id="COG2371">
    <property type="taxonomic scope" value="Bacteria"/>
</dbReference>
<dbReference type="HOGENOM" id="CLU_093757_3_0_10"/>
<dbReference type="OrthoDB" id="9810882at2"/>
<dbReference type="Proteomes" id="UP000006694">
    <property type="component" value="Chromosome"/>
</dbReference>
<dbReference type="GO" id="GO:0005737">
    <property type="term" value="C:cytoplasm"/>
    <property type="evidence" value="ECO:0007669"/>
    <property type="project" value="UniProtKB-SubCell"/>
</dbReference>
<dbReference type="GO" id="GO:0016151">
    <property type="term" value="F:nickel cation binding"/>
    <property type="evidence" value="ECO:0007669"/>
    <property type="project" value="UniProtKB-UniRule"/>
</dbReference>
<dbReference type="GO" id="GO:0051082">
    <property type="term" value="F:unfolded protein binding"/>
    <property type="evidence" value="ECO:0007669"/>
    <property type="project" value="UniProtKB-UniRule"/>
</dbReference>
<dbReference type="GO" id="GO:0006457">
    <property type="term" value="P:protein folding"/>
    <property type="evidence" value="ECO:0007669"/>
    <property type="project" value="InterPro"/>
</dbReference>
<dbReference type="GO" id="GO:0065003">
    <property type="term" value="P:protein-containing complex assembly"/>
    <property type="evidence" value="ECO:0007669"/>
    <property type="project" value="InterPro"/>
</dbReference>
<dbReference type="GO" id="GO:0019627">
    <property type="term" value="P:urea metabolic process"/>
    <property type="evidence" value="ECO:0007669"/>
    <property type="project" value="InterPro"/>
</dbReference>
<dbReference type="CDD" id="cd00571">
    <property type="entry name" value="UreE"/>
    <property type="match status" value="1"/>
</dbReference>
<dbReference type="Gene3D" id="2.60.260.20">
    <property type="entry name" value="Urease metallochaperone UreE, N-terminal domain"/>
    <property type="match status" value="1"/>
</dbReference>
<dbReference type="Gene3D" id="3.30.70.790">
    <property type="entry name" value="UreE, C-terminal domain"/>
    <property type="match status" value="1"/>
</dbReference>
<dbReference type="HAMAP" id="MF_00822">
    <property type="entry name" value="UreE"/>
    <property type="match status" value="1"/>
</dbReference>
<dbReference type="InterPro" id="IPR012406">
    <property type="entry name" value="UreE"/>
</dbReference>
<dbReference type="InterPro" id="IPR007864">
    <property type="entry name" value="UreE_C_dom"/>
</dbReference>
<dbReference type="InterPro" id="IPR004029">
    <property type="entry name" value="UreE_N"/>
</dbReference>
<dbReference type="InterPro" id="IPR036118">
    <property type="entry name" value="UreE_N_sf"/>
</dbReference>
<dbReference type="NCBIfam" id="NF009754">
    <property type="entry name" value="PRK13261.1-6"/>
    <property type="match status" value="1"/>
</dbReference>
<dbReference type="Pfam" id="PF05194">
    <property type="entry name" value="UreE_C"/>
    <property type="match status" value="1"/>
</dbReference>
<dbReference type="Pfam" id="PF02814">
    <property type="entry name" value="UreE_N"/>
    <property type="match status" value="1"/>
</dbReference>
<dbReference type="PIRSF" id="PIRSF036402">
    <property type="entry name" value="Ureas_acces_UreE"/>
    <property type="match status" value="1"/>
</dbReference>
<dbReference type="SMART" id="SM00988">
    <property type="entry name" value="UreE_N"/>
    <property type="match status" value="1"/>
</dbReference>
<dbReference type="SUPFAM" id="SSF69737">
    <property type="entry name" value="Urease metallochaperone UreE, C-terminal domain"/>
    <property type="match status" value="1"/>
</dbReference>
<dbReference type="SUPFAM" id="SSF69287">
    <property type="entry name" value="Urease metallochaperone UreE, N-terminal domain"/>
    <property type="match status" value="1"/>
</dbReference>